<accession>Q9VIT2</accession>
<accession>B5RJH0</accession>
<accession>Q8MRY7</accession>
<sequence length="189" mass="22144">MMKIVLISGKRKCGKDYISERLQRRLGSRSCIVRISEPIKSEWARKLQLDLDALLGDGPYKEKYRRDMIVWSDEVRAQDYGYFCRVAMEEALSRQQTPYILVSDVRRKNDIRWFRETYGPERVITLRLTSRPETRSARGWTFTAGIDDVPSECDLDDLADGFDVVLANDEELDQEAIDILLDRLQLQYR</sequence>
<evidence type="ECO:0000250" key="1">
    <source>
        <dbReference type="UniProtKB" id="Q15126"/>
    </source>
</evidence>
<evidence type="ECO:0000305" key="2"/>
<evidence type="ECO:0000312" key="3">
    <source>
        <dbReference type="FlyBase" id="FBgn0032811"/>
    </source>
</evidence>
<reference key="1">
    <citation type="journal article" date="2000" name="Science">
        <title>The genome sequence of Drosophila melanogaster.</title>
        <authorList>
            <person name="Adams M.D."/>
            <person name="Celniker S.E."/>
            <person name="Holt R.A."/>
            <person name="Evans C.A."/>
            <person name="Gocayne J.D."/>
            <person name="Amanatides P.G."/>
            <person name="Scherer S.E."/>
            <person name="Li P.W."/>
            <person name="Hoskins R.A."/>
            <person name="Galle R.F."/>
            <person name="George R.A."/>
            <person name="Lewis S.E."/>
            <person name="Richards S."/>
            <person name="Ashburner M."/>
            <person name="Henderson S.N."/>
            <person name="Sutton G.G."/>
            <person name="Wortman J.R."/>
            <person name="Yandell M.D."/>
            <person name="Zhang Q."/>
            <person name="Chen L.X."/>
            <person name="Brandon R.C."/>
            <person name="Rogers Y.-H.C."/>
            <person name="Blazej R.G."/>
            <person name="Champe M."/>
            <person name="Pfeiffer B.D."/>
            <person name="Wan K.H."/>
            <person name="Doyle C."/>
            <person name="Baxter E.G."/>
            <person name="Helt G."/>
            <person name="Nelson C.R."/>
            <person name="Miklos G.L.G."/>
            <person name="Abril J.F."/>
            <person name="Agbayani A."/>
            <person name="An H.-J."/>
            <person name="Andrews-Pfannkoch C."/>
            <person name="Baldwin D."/>
            <person name="Ballew R.M."/>
            <person name="Basu A."/>
            <person name="Baxendale J."/>
            <person name="Bayraktaroglu L."/>
            <person name="Beasley E.M."/>
            <person name="Beeson K.Y."/>
            <person name="Benos P.V."/>
            <person name="Berman B.P."/>
            <person name="Bhandari D."/>
            <person name="Bolshakov S."/>
            <person name="Borkova D."/>
            <person name="Botchan M.R."/>
            <person name="Bouck J."/>
            <person name="Brokstein P."/>
            <person name="Brottier P."/>
            <person name="Burtis K.C."/>
            <person name="Busam D.A."/>
            <person name="Butler H."/>
            <person name="Cadieu E."/>
            <person name="Center A."/>
            <person name="Chandra I."/>
            <person name="Cherry J.M."/>
            <person name="Cawley S."/>
            <person name="Dahlke C."/>
            <person name="Davenport L.B."/>
            <person name="Davies P."/>
            <person name="de Pablos B."/>
            <person name="Delcher A."/>
            <person name="Deng Z."/>
            <person name="Mays A.D."/>
            <person name="Dew I."/>
            <person name="Dietz S.M."/>
            <person name="Dodson K."/>
            <person name="Doup L.E."/>
            <person name="Downes M."/>
            <person name="Dugan-Rocha S."/>
            <person name="Dunkov B.C."/>
            <person name="Dunn P."/>
            <person name="Durbin K.J."/>
            <person name="Evangelista C.C."/>
            <person name="Ferraz C."/>
            <person name="Ferriera S."/>
            <person name="Fleischmann W."/>
            <person name="Fosler C."/>
            <person name="Gabrielian A.E."/>
            <person name="Garg N.S."/>
            <person name="Gelbart W.M."/>
            <person name="Glasser K."/>
            <person name="Glodek A."/>
            <person name="Gong F."/>
            <person name="Gorrell J.H."/>
            <person name="Gu Z."/>
            <person name="Guan P."/>
            <person name="Harris M."/>
            <person name="Harris N.L."/>
            <person name="Harvey D.A."/>
            <person name="Heiman T.J."/>
            <person name="Hernandez J.R."/>
            <person name="Houck J."/>
            <person name="Hostin D."/>
            <person name="Houston K.A."/>
            <person name="Howland T.J."/>
            <person name="Wei M.-H."/>
            <person name="Ibegwam C."/>
            <person name="Jalali M."/>
            <person name="Kalush F."/>
            <person name="Karpen G.H."/>
            <person name="Ke Z."/>
            <person name="Kennison J.A."/>
            <person name="Ketchum K.A."/>
            <person name="Kimmel B.E."/>
            <person name="Kodira C.D."/>
            <person name="Kraft C.L."/>
            <person name="Kravitz S."/>
            <person name="Kulp D."/>
            <person name="Lai Z."/>
            <person name="Lasko P."/>
            <person name="Lei Y."/>
            <person name="Levitsky A.A."/>
            <person name="Li J.H."/>
            <person name="Li Z."/>
            <person name="Liang Y."/>
            <person name="Lin X."/>
            <person name="Liu X."/>
            <person name="Mattei B."/>
            <person name="McIntosh T.C."/>
            <person name="McLeod M.P."/>
            <person name="McPherson D."/>
            <person name="Merkulov G."/>
            <person name="Milshina N.V."/>
            <person name="Mobarry C."/>
            <person name="Morris J."/>
            <person name="Moshrefi A."/>
            <person name="Mount S.M."/>
            <person name="Moy M."/>
            <person name="Murphy B."/>
            <person name="Murphy L."/>
            <person name="Muzny D.M."/>
            <person name="Nelson D.L."/>
            <person name="Nelson D.R."/>
            <person name="Nelson K.A."/>
            <person name="Nixon K."/>
            <person name="Nusskern D.R."/>
            <person name="Pacleb J.M."/>
            <person name="Palazzolo M."/>
            <person name="Pittman G.S."/>
            <person name="Pan S."/>
            <person name="Pollard J."/>
            <person name="Puri V."/>
            <person name="Reese M.G."/>
            <person name="Reinert K."/>
            <person name="Remington K."/>
            <person name="Saunders R.D.C."/>
            <person name="Scheeler F."/>
            <person name="Shen H."/>
            <person name="Shue B.C."/>
            <person name="Siden-Kiamos I."/>
            <person name="Simpson M."/>
            <person name="Skupski M.P."/>
            <person name="Smith T.J."/>
            <person name="Spier E."/>
            <person name="Spradling A.C."/>
            <person name="Stapleton M."/>
            <person name="Strong R."/>
            <person name="Sun E."/>
            <person name="Svirskas R."/>
            <person name="Tector C."/>
            <person name="Turner R."/>
            <person name="Venter E."/>
            <person name="Wang A.H."/>
            <person name="Wang X."/>
            <person name="Wang Z.-Y."/>
            <person name="Wassarman D.A."/>
            <person name="Weinstock G.M."/>
            <person name="Weissenbach J."/>
            <person name="Williams S.M."/>
            <person name="Woodage T."/>
            <person name="Worley K.C."/>
            <person name="Wu D."/>
            <person name="Yang S."/>
            <person name="Yao Q.A."/>
            <person name="Ye J."/>
            <person name="Yeh R.-F."/>
            <person name="Zaveri J.S."/>
            <person name="Zhan M."/>
            <person name="Zhang G."/>
            <person name="Zhao Q."/>
            <person name="Zheng L."/>
            <person name="Zheng X.H."/>
            <person name="Zhong F.N."/>
            <person name="Zhong W."/>
            <person name="Zhou X."/>
            <person name="Zhu S.C."/>
            <person name="Zhu X."/>
            <person name="Smith H.O."/>
            <person name="Gibbs R.A."/>
            <person name="Myers E.W."/>
            <person name="Rubin G.M."/>
            <person name="Venter J.C."/>
        </authorList>
    </citation>
    <scope>NUCLEOTIDE SEQUENCE [LARGE SCALE GENOMIC DNA]</scope>
    <source>
        <strain>Berkeley</strain>
    </source>
</reference>
<reference key="2">
    <citation type="journal article" date="2002" name="Genome Biol.">
        <title>Annotation of the Drosophila melanogaster euchromatic genome: a systematic review.</title>
        <authorList>
            <person name="Misra S."/>
            <person name="Crosby M.A."/>
            <person name="Mungall C.J."/>
            <person name="Matthews B.B."/>
            <person name="Campbell K.S."/>
            <person name="Hradecky P."/>
            <person name="Huang Y."/>
            <person name="Kaminker J.S."/>
            <person name="Millburn G.H."/>
            <person name="Prochnik S.E."/>
            <person name="Smith C.D."/>
            <person name="Tupy J.L."/>
            <person name="Whitfield E.J."/>
            <person name="Bayraktaroglu L."/>
            <person name="Berman B.P."/>
            <person name="Bettencourt B.R."/>
            <person name="Celniker S.E."/>
            <person name="de Grey A.D.N.J."/>
            <person name="Drysdale R.A."/>
            <person name="Harris N.L."/>
            <person name="Richter J."/>
            <person name="Russo S."/>
            <person name="Schroeder A.J."/>
            <person name="Shu S.Q."/>
            <person name="Stapleton M."/>
            <person name="Yamada C."/>
            <person name="Ashburner M."/>
            <person name="Gelbart W.M."/>
            <person name="Rubin G.M."/>
            <person name="Lewis S.E."/>
        </authorList>
    </citation>
    <scope>GENOME REANNOTATION</scope>
    <source>
        <strain>Berkeley</strain>
    </source>
</reference>
<reference key="3">
    <citation type="journal article" date="2002" name="Genome Biol.">
        <title>A Drosophila full-length cDNA resource.</title>
        <authorList>
            <person name="Stapleton M."/>
            <person name="Carlson J.W."/>
            <person name="Brokstein P."/>
            <person name="Yu C."/>
            <person name="Champe M."/>
            <person name="George R.A."/>
            <person name="Guarin H."/>
            <person name="Kronmiller B."/>
            <person name="Pacleb J.M."/>
            <person name="Park S."/>
            <person name="Wan K.H."/>
            <person name="Rubin G.M."/>
            <person name="Celniker S.E."/>
        </authorList>
    </citation>
    <scope>NUCLEOTIDE SEQUENCE [LARGE SCALE MRNA]</scope>
    <source>
        <strain>Berkeley</strain>
        <tissue>Embryo</tissue>
    </source>
</reference>
<reference key="4">
    <citation type="submission" date="2008-09" db="EMBL/GenBank/DDBJ databases">
        <authorList>
            <person name="Carlson J.W."/>
            <person name="Booth B."/>
            <person name="Frise E."/>
            <person name="Park S."/>
            <person name="Wan K.H."/>
            <person name="Yu C."/>
            <person name="Celniker S.E."/>
        </authorList>
    </citation>
    <scope>NUCLEOTIDE SEQUENCE [LARGE SCALE MRNA]</scope>
    <source>
        <strain>Berkeley</strain>
    </source>
</reference>
<feature type="chain" id="PRO_0000058471" description="Phosphomevalonate kinase">
    <location>
        <begin position="1"/>
        <end position="189"/>
    </location>
</feature>
<feature type="binding site" evidence="1">
    <location>
        <begin position="10"/>
        <end position="16"/>
    </location>
    <ligand>
        <name>ATP</name>
        <dbReference type="ChEBI" id="CHEBI:30616"/>
    </ligand>
</feature>
<feature type="binding site" evidence="1">
    <location>
        <position position="138"/>
    </location>
    <ligand>
        <name>ATP</name>
        <dbReference type="ChEBI" id="CHEBI:30616"/>
    </ligand>
</feature>
<feature type="binding site" evidence="1">
    <location>
        <position position="168"/>
    </location>
    <ligand>
        <name>substrate</name>
    </ligand>
</feature>
<feature type="sequence conflict" description="In Ref. 3; AAM51057." evidence="2" ref="3">
    <original>R</original>
    <variation>H</variation>
    <location>
        <position position="45"/>
    </location>
</feature>
<keyword id="KW-0067">ATP-binding</keyword>
<keyword id="KW-0152">Cholesterol biosynthesis</keyword>
<keyword id="KW-0153">Cholesterol metabolism</keyword>
<keyword id="KW-0963">Cytoplasm</keyword>
<keyword id="KW-0418">Kinase</keyword>
<keyword id="KW-0444">Lipid biosynthesis</keyword>
<keyword id="KW-0443">Lipid metabolism</keyword>
<keyword id="KW-0547">Nucleotide-binding</keyword>
<keyword id="KW-1185">Reference proteome</keyword>
<keyword id="KW-0752">Steroid biosynthesis</keyword>
<keyword id="KW-0753">Steroid metabolism</keyword>
<keyword id="KW-0756">Sterol biosynthesis</keyword>
<keyword id="KW-1207">Sterol metabolism</keyword>
<keyword id="KW-0808">Transferase</keyword>
<proteinExistence type="evidence at transcript level"/>
<comment type="catalytic activity">
    <reaction evidence="1">
        <text>(R)-5-phosphomevalonate + ATP = (R)-5-diphosphomevalonate + ADP</text>
        <dbReference type="Rhea" id="RHEA:16341"/>
        <dbReference type="ChEBI" id="CHEBI:30616"/>
        <dbReference type="ChEBI" id="CHEBI:57557"/>
        <dbReference type="ChEBI" id="CHEBI:58146"/>
        <dbReference type="ChEBI" id="CHEBI:456216"/>
        <dbReference type="EC" id="2.7.4.2"/>
    </reaction>
</comment>
<comment type="pathway">
    <text>Isoprenoid biosynthesis; isopentenyl diphosphate biosynthesis via mevalonate pathway; isopentenyl diphosphate from (R)-mevalonate: step 2/3.</text>
</comment>
<comment type="subcellular location">
    <subcellularLocation>
        <location evidence="1">Cytoplasm</location>
        <location evidence="1">Cytosol</location>
    </subcellularLocation>
</comment>
<gene>
    <name evidence="3" type="primary">Pmvk</name>
    <name evidence="3" type="ORF">CG10268</name>
</gene>
<name>PMVK_DROME</name>
<dbReference type="EC" id="2.7.4.2" evidence="1"/>
<dbReference type="EMBL" id="AE014134">
    <property type="protein sequence ID" value="AAF53833.1"/>
    <property type="molecule type" value="Genomic_DNA"/>
</dbReference>
<dbReference type="EMBL" id="AY119197">
    <property type="protein sequence ID" value="AAM51057.1"/>
    <property type="molecule type" value="mRNA"/>
</dbReference>
<dbReference type="EMBL" id="BT044444">
    <property type="protein sequence ID" value="ACH92509.1"/>
    <property type="molecule type" value="mRNA"/>
</dbReference>
<dbReference type="RefSeq" id="NP_609992.1">
    <property type="nucleotide sequence ID" value="NM_136148.2"/>
</dbReference>
<dbReference type="SMR" id="Q9VIT2"/>
<dbReference type="FunCoup" id="Q9VIT2">
    <property type="interactions" value="725"/>
</dbReference>
<dbReference type="STRING" id="7227.FBpp0080807"/>
<dbReference type="PaxDb" id="7227-FBpp0080807"/>
<dbReference type="DNASU" id="35255"/>
<dbReference type="EnsemblMetazoa" id="FBtr0081266">
    <property type="protein sequence ID" value="FBpp0080807"/>
    <property type="gene ID" value="FBgn0032811"/>
</dbReference>
<dbReference type="GeneID" id="35255"/>
<dbReference type="KEGG" id="dme:Dmel_CG10268"/>
<dbReference type="UCSC" id="CG10268-RA">
    <property type="organism name" value="d. melanogaster"/>
</dbReference>
<dbReference type="AGR" id="FB:FBgn0032811"/>
<dbReference type="CTD" id="10654"/>
<dbReference type="FlyBase" id="FBgn0032811">
    <property type="gene designation" value="Pmvk"/>
</dbReference>
<dbReference type="VEuPathDB" id="VectorBase:FBgn0032811"/>
<dbReference type="eggNOG" id="ENOG502RXWP">
    <property type="taxonomic scope" value="Eukaryota"/>
</dbReference>
<dbReference type="GeneTree" id="ENSGT00390000014801"/>
<dbReference type="HOGENOM" id="CLU_092097_0_0_1"/>
<dbReference type="InParanoid" id="Q9VIT2"/>
<dbReference type="OMA" id="QKRGWVY"/>
<dbReference type="OrthoDB" id="2401875at2759"/>
<dbReference type="PhylomeDB" id="Q9VIT2"/>
<dbReference type="Reactome" id="R-DME-191273">
    <property type="pathway name" value="Cholesterol biosynthesis"/>
</dbReference>
<dbReference type="UniPathway" id="UPA00057">
    <property type="reaction ID" value="UER00099"/>
</dbReference>
<dbReference type="BioGRID-ORCS" id="35255">
    <property type="hits" value="1 hit in 3 CRISPR screens"/>
</dbReference>
<dbReference type="GenomeRNAi" id="35255"/>
<dbReference type="PRO" id="PR:Q9VIT2"/>
<dbReference type="Proteomes" id="UP000000803">
    <property type="component" value="Chromosome 2L"/>
</dbReference>
<dbReference type="Bgee" id="FBgn0032811">
    <property type="expression patterns" value="Expressed in spermatocyte in testis and 43 other cell types or tissues"/>
</dbReference>
<dbReference type="GO" id="GO:0005829">
    <property type="term" value="C:cytosol"/>
    <property type="evidence" value="ECO:0007669"/>
    <property type="project" value="UniProtKB-SubCell"/>
</dbReference>
<dbReference type="GO" id="GO:0005777">
    <property type="term" value="C:peroxisome"/>
    <property type="evidence" value="ECO:0000250"/>
    <property type="project" value="FlyBase"/>
</dbReference>
<dbReference type="GO" id="GO:0005524">
    <property type="term" value="F:ATP binding"/>
    <property type="evidence" value="ECO:0007669"/>
    <property type="project" value="UniProtKB-KW"/>
</dbReference>
<dbReference type="GO" id="GO:0004631">
    <property type="term" value="F:phosphomevalonate kinase activity"/>
    <property type="evidence" value="ECO:0000250"/>
    <property type="project" value="FlyBase"/>
</dbReference>
<dbReference type="GO" id="GO:0006695">
    <property type="term" value="P:cholesterol biosynthetic process"/>
    <property type="evidence" value="ECO:0000250"/>
    <property type="project" value="FlyBase"/>
</dbReference>
<dbReference type="GO" id="GO:0019287">
    <property type="term" value="P:isopentenyl diphosphate biosynthetic process, mevalonate pathway"/>
    <property type="evidence" value="ECO:0000318"/>
    <property type="project" value="GO_Central"/>
</dbReference>
<dbReference type="GO" id="GO:0008299">
    <property type="term" value="P:isoprenoid biosynthetic process"/>
    <property type="evidence" value="ECO:0000305"/>
    <property type="project" value="FlyBase"/>
</dbReference>
<dbReference type="FunFam" id="3.40.50.300:FF:001026">
    <property type="entry name" value="Phosphomevalonate kinase"/>
    <property type="match status" value="1"/>
</dbReference>
<dbReference type="Gene3D" id="3.40.50.300">
    <property type="entry name" value="P-loop containing nucleotide triphosphate hydrolases"/>
    <property type="match status" value="1"/>
</dbReference>
<dbReference type="InterPro" id="IPR027417">
    <property type="entry name" value="P-loop_NTPase"/>
</dbReference>
<dbReference type="InterPro" id="IPR005919">
    <property type="entry name" value="Pmev_kin_anim"/>
</dbReference>
<dbReference type="NCBIfam" id="TIGR01223">
    <property type="entry name" value="Pmev_kin_anim"/>
    <property type="match status" value="1"/>
</dbReference>
<dbReference type="PANTHER" id="PTHR13101">
    <property type="entry name" value="PHOSPHOMEVALONATE KINASE"/>
    <property type="match status" value="1"/>
</dbReference>
<dbReference type="PANTHER" id="PTHR13101:SF1">
    <property type="entry name" value="PHOSPHOMEVALONATE KINASE"/>
    <property type="match status" value="1"/>
</dbReference>
<dbReference type="Pfam" id="PF04275">
    <property type="entry name" value="P-mevalo_kinase"/>
    <property type="match status" value="1"/>
</dbReference>
<dbReference type="PIRSF" id="PIRSF036639">
    <property type="entry name" value="PMK_anim"/>
    <property type="match status" value="1"/>
</dbReference>
<dbReference type="SUPFAM" id="SSF52540">
    <property type="entry name" value="P-loop containing nucleoside triphosphate hydrolases"/>
    <property type="match status" value="1"/>
</dbReference>
<organism>
    <name type="scientific">Drosophila melanogaster</name>
    <name type="common">Fruit fly</name>
    <dbReference type="NCBI Taxonomy" id="7227"/>
    <lineage>
        <taxon>Eukaryota</taxon>
        <taxon>Metazoa</taxon>
        <taxon>Ecdysozoa</taxon>
        <taxon>Arthropoda</taxon>
        <taxon>Hexapoda</taxon>
        <taxon>Insecta</taxon>
        <taxon>Pterygota</taxon>
        <taxon>Neoptera</taxon>
        <taxon>Endopterygota</taxon>
        <taxon>Diptera</taxon>
        <taxon>Brachycera</taxon>
        <taxon>Muscomorpha</taxon>
        <taxon>Ephydroidea</taxon>
        <taxon>Drosophilidae</taxon>
        <taxon>Drosophila</taxon>
        <taxon>Sophophora</taxon>
    </lineage>
</organism>
<protein>
    <recommendedName>
        <fullName evidence="3">Phosphomevalonate kinase</fullName>
        <shortName evidence="1">PMKase</shortName>
        <ecNumber evidence="1">2.7.4.2</ecNumber>
    </recommendedName>
</protein>